<accession>Q57SC4</accession>
<keyword id="KW-0997">Cell inner membrane</keyword>
<keyword id="KW-1003">Cell membrane</keyword>
<keyword id="KW-0350">Heme biosynthesis</keyword>
<keyword id="KW-0472">Membrane</keyword>
<keyword id="KW-0808">Transferase</keyword>
<keyword id="KW-0812">Transmembrane</keyword>
<keyword id="KW-1133">Transmembrane helix</keyword>
<feature type="chain" id="PRO_0000326936" description="Protoheme IX farnesyltransferase">
    <location>
        <begin position="1"/>
        <end position="296"/>
    </location>
</feature>
<feature type="topological domain" description="Cytoplasmic" evidence="1">
    <location>
        <begin position="1"/>
        <end position="9"/>
    </location>
</feature>
<feature type="transmembrane region" description="Helical" evidence="1">
    <location>
        <begin position="10"/>
        <end position="28"/>
    </location>
</feature>
<feature type="topological domain" description="Periplasmic" evidence="1">
    <location>
        <begin position="29"/>
        <end position="37"/>
    </location>
</feature>
<feature type="transmembrane region" description="Helical" evidence="1">
    <location>
        <begin position="38"/>
        <end position="56"/>
    </location>
</feature>
<feature type="topological domain" description="Cytoplasmic" evidence="1">
    <location>
        <begin position="57"/>
        <end position="78"/>
    </location>
</feature>
<feature type="transmembrane region" description="Helical" evidence="1">
    <location>
        <begin position="79"/>
        <end position="97"/>
    </location>
</feature>
<feature type="topological domain" description="Periplasmic" evidence="1">
    <location>
        <begin position="98"/>
        <end position="107"/>
    </location>
</feature>
<feature type="transmembrane region" description="Helical" evidence="1">
    <location>
        <begin position="108"/>
        <end position="126"/>
    </location>
</feature>
<feature type="topological domain" description="Cytoplasmic" evidence="1">
    <location>
        <begin position="127"/>
        <end position="197"/>
    </location>
</feature>
<feature type="transmembrane region" description="Helical" evidence="1">
    <location>
        <begin position="198"/>
        <end position="216"/>
    </location>
</feature>
<feature type="topological domain" description="Periplasmic" evidence="1">
    <location>
        <begin position="217"/>
        <end position="228"/>
    </location>
</feature>
<feature type="transmembrane region" description="Helical" evidence="1">
    <location>
        <begin position="229"/>
        <end position="247"/>
    </location>
</feature>
<feature type="topological domain" description="Cytoplasmic" evidence="1">
    <location>
        <begin position="248"/>
        <end position="268"/>
    </location>
</feature>
<feature type="transmembrane region" description="Helical" evidence="1">
    <location>
        <begin position="269"/>
        <end position="287"/>
    </location>
</feature>
<feature type="topological domain" description="Periplasmic" evidence="1">
    <location>
        <begin position="288"/>
        <end position="296"/>
    </location>
</feature>
<proteinExistence type="inferred from homology"/>
<organism>
    <name type="scientific">Salmonella choleraesuis (strain SC-B67)</name>
    <dbReference type="NCBI Taxonomy" id="321314"/>
    <lineage>
        <taxon>Bacteria</taxon>
        <taxon>Pseudomonadati</taxon>
        <taxon>Pseudomonadota</taxon>
        <taxon>Gammaproteobacteria</taxon>
        <taxon>Enterobacterales</taxon>
        <taxon>Enterobacteriaceae</taxon>
        <taxon>Salmonella</taxon>
    </lineage>
</organism>
<comment type="function">
    <text evidence="1">Converts heme B (protoheme IX) to heme O by substitution of the vinyl group on carbon 2 of heme B porphyrin ring with a hydroxyethyl farnesyl side group.</text>
</comment>
<comment type="catalytic activity">
    <reaction evidence="1">
        <text>heme b + (2E,6E)-farnesyl diphosphate + H2O = Fe(II)-heme o + diphosphate</text>
        <dbReference type="Rhea" id="RHEA:28070"/>
        <dbReference type="ChEBI" id="CHEBI:15377"/>
        <dbReference type="ChEBI" id="CHEBI:33019"/>
        <dbReference type="ChEBI" id="CHEBI:60344"/>
        <dbReference type="ChEBI" id="CHEBI:60530"/>
        <dbReference type="ChEBI" id="CHEBI:175763"/>
        <dbReference type="EC" id="2.5.1.141"/>
    </reaction>
</comment>
<comment type="pathway">
    <text evidence="1">Porphyrin-containing compound metabolism; heme O biosynthesis; heme O from protoheme: step 1/1.</text>
</comment>
<comment type="subcellular location">
    <subcellularLocation>
        <location evidence="1">Cell inner membrane</location>
        <topology evidence="1">Multi-pass membrane protein</topology>
    </subcellularLocation>
</comment>
<comment type="miscellaneous">
    <text evidence="1">Carbon 2 of the heme B porphyrin ring is defined according to the Fischer nomenclature.</text>
</comment>
<comment type="similarity">
    <text evidence="1">Belongs to the UbiA prenyltransferase family. Protoheme IX farnesyltransferase subfamily.</text>
</comment>
<comment type="sequence caution" evidence="2">
    <conflict type="erroneous initiation">
        <sequence resource="EMBL-CDS" id="AAX64387"/>
    </conflict>
</comment>
<sequence length="296" mass="32390">MMFKQYLQVTKPGIIFGNLISVIGGFLLASKGSIDYPLFIYTLVGVSLVVASGCVFNNYIDRDIDRKMERTKNRVLVKGLISPGVSLVYATLLGIAGFMLLWFGANPLACWLGVMGFVVYVGVYSLYMKRHSVYGTLIGSLSGAAPPVIGYCAVTGDFDSGAAILLAIFSLWQMPHSYAIAIFRFKDYQAANIPVLPVVKGISVAKNHITLYIIAFAVATLMLTLGGYAGYKYLVVAAAVSVWWLGMALRGYKVEDDKVWARKLFGFSIIAITALSIMMSVDFMVPNSQNLLTYVW</sequence>
<gene>
    <name evidence="1" type="primary">cyoE</name>
    <name type="ordered locus">SCH_0481</name>
</gene>
<reference key="1">
    <citation type="journal article" date="2005" name="Nucleic Acids Res.">
        <title>The genome sequence of Salmonella enterica serovar Choleraesuis, a highly invasive and resistant zoonotic pathogen.</title>
        <authorList>
            <person name="Chiu C.-H."/>
            <person name="Tang P."/>
            <person name="Chu C."/>
            <person name="Hu S."/>
            <person name="Bao Q."/>
            <person name="Yu J."/>
            <person name="Chou Y.-Y."/>
            <person name="Wang H.-S."/>
            <person name="Lee Y.-S."/>
        </authorList>
    </citation>
    <scope>NUCLEOTIDE SEQUENCE [LARGE SCALE GENOMIC DNA]</scope>
    <source>
        <strain>SC-B67</strain>
    </source>
</reference>
<evidence type="ECO:0000255" key="1">
    <source>
        <dbReference type="HAMAP-Rule" id="MF_00154"/>
    </source>
</evidence>
<evidence type="ECO:0000305" key="2"/>
<name>CYOE_SALCH</name>
<dbReference type="EC" id="2.5.1.141" evidence="1"/>
<dbReference type="EMBL" id="AE017220">
    <property type="protein sequence ID" value="AAX64387.1"/>
    <property type="status" value="ALT_INIT"/>
    <property type="molecule type" value="Genomic_DNA"/>
</dbReference>
<dbReference type="RefSeq" id="WP_000971352.1">
    <property type="nucleotide sequence ID" value="NC_006905.1"/>
</dbReference>
<dbReference type="SMR" id="Q57SC4"/>
<dbReference type="KEGG" id="sec:SCH_0481"/>
<dbReference type="HOGENOM" id="CLU_029631_0_0_6"/>
<dbReference type="UniPathway" id="UPA00834">
    <property type="reaction ID" value="UER00712"/>
</dbReference>
<dbReference type="Proteomes" id="UP000000538">
    <property type="component" value="Chromosome"/>
</dbReference>
<dbReference type="GO" id="GO:0005886">
    <property type="term" value="C:plasma membrane"/>
    <property type="evidence" value="ECO:0007669"/>
    <property type="project" value="UniProtKB-SubCell"/>
</dbReference>
<dbReference type="GO" id="GO:0008495">
    <property type="term" value="F:protoheme IX farnesyltransferase activity"/>
    <property type="evidence" value="ECO:0007669"/>
    <property type="project" value="UniProtKB-UniRule"/>
</dbReference>
<dbReference type="GO" id="GO:0048034">
    <property type="term" value="P:heme O biosynthetic process"/>
    <property type="evidence" value="ECO:0007669"/>
    <property type="project" value="UniProtKB-UniRule"/>
</dbReference>
<dbReference type="CDD" id="cd13957">
    <property type="entry name" value="PT_UbiA_Cox10"/>
    <property type="match status" value="1"/>
</dbReference>
<dbReference type="FunFam" id="1.10.357.140:FF:000001">
    <property type="entry name" value="Protoheme IX farnesyltransferase"/>
    <property type="match status" value="1"/>
</dbReference>
<dbReference type="Gene3D" id="1.10.357.140">
    <property type="entry name" value="UbiA prenyltransferase"/>
    <property type="match status" value="1"/>
</dbReference>
<dbReference type="HAMAP" id="MF_00154">
    <property type="entry name" value="CyoE_CtaB"/>
    <property type="match status" value="1"/>
</dbReference>
<dbReference type="InterPro" id="IPR006369">
    <property type="entry name" value="Protohaem_IX_farnesylTrfase"/>
</dbReference>
<dbReference type="InterPro" id="IPR000537">
    <property type="entry name" value="UbiA_prenyltransferase"/>
</dbReference>
<dbReference type="InterPro" id="IPR030470">
    <property type="entry name" value="UbiA_prenylTrfase_CS"/>
</dbReference>
<dbReference type="InterPro" id="IPR044878">
    <property type="entry name" value="UbiA_sf"/>
</dbReference>
<dbReference type="NCBIfam" id="TIGR01473">
    <property type="entry name" value="cyoE_ctaB"/>
    <property type="match status" value="1"/>
</dbReference>
<dbReference type="NCBIfam" id="NF003348">
    <property type="entry name" value="PRK04375.1-1"/>
    <property type="match status" value="1"/>
</dbReference>
<dbReference type="PANTHER" id="PTHR43448">
    <property type="entry name" value="PROTOHEME IX FARNESYLTRANSFERASE, MITOCHONDRIAL"/>
    <property type="match status" value="1"/>
</dbReference>
<dbReference type="PANTHER" id="PTHR43448:SF2">
    <property type="entry name" value="PROTOHEME IX FARNESYLTRANSFERASE, MITOCHONDRIAL"/>
    <property type="match status" value="1"/>
</dbReference>
<dbReference type="Pfam" id="PF01040">
    <property type="entry name" value="UbiA"/>
    <property type="match status" value="1"/>
</dbReference>
<dbReference type="SUPFAM" id="SSF82866">
    <property type="entry name" value="Multidrug efflux transporter AcrB transmembrane domain"/>
    <property type="match status" value="1"/>
</dbReference>
<dbReference type="PROSITE" id="PS00943">
    <property type="entry name" value="UBIA"/>
    <property type="match status" value="1"/>
</dbReference>
<protein>
    <recommendedName>
        <fullName evidence="1">Protoheme IX farnesyltransferase</fullName>
        <ecNumber evidence="1">2.5.1.141</ecNumber>
    </recommendedName>
    <alternativeName>
        <fullName evidence="1">Heme B farnesyltransferase</fullName>
    </alternativeName>
    <alternativeName>
        <fullName evidence="1">Heme O synthase</fullName>
    </alternativeName>
</protein>